<sequence length="190" mass="22206">MRIAILGGTYNPVHIGHMFLAKELEHFLNVDKILFIPTHKPVHKRVENISVKDRIAMLKLAVQHEKNMFIDECDIVNGGITYTVDTIACIKNKYVHDDIYLVIGDDLFESFDSWKNPEKIVESVNLVVVHRIYSERLISRFKHTYIDNRIFPISSSEIRHRIEQGLPVDYLLPFDVLRYIKNNNLYVKGK</sequence>
<gene>
    <name evidence="1" type="primary">nadD</name>
    <name type="ordered locus">BH0782</name>
</gene>
<protein>
    <recommendedName>
        <fullName evidence="1">Probable nicotinate-nucleotide adenylyltransferase</fullName>
        <ecNumber evidence="1">2.7.7.18</ecNumber>
    </recommendedName>
    <alternativeName>
        <fullName evidence="1">Deamido-NAD(+) diphosphorylase</fullName>
    </alternativeName>
    <alternativeName>
        <fullName evidence="1">Deamido-NAD(+) pyrophosphorylase</fullName>
    </alternativeName>
    <alternativeName>
        <fullName evidence="1">Nicotinate mononucleotide adenylyltransferase</fullName>
        <shortName evidence="1">NaMN adenylyltransferase</shortName>
    </alternativeName>
</protein>
<name>NADD_BORHD</name>
<accession>B2S1C4</accession>
<organism>
    <name type="scientific">Borrelia hermsii (strain HS1 / DAH)</name>
    <dbReference type="NCBI Taxonomy" id="314723"/>
    <lineage>
        <taxon>Bacteria</taxon>
        <taxon>Pseudomonadati</taxon>
        <taxon>Spirochaetota</taxon>
        <taxon>Spirochaetia</taxon>
        <taxon>Spirochaetales</taxon>
        <taxon>Borreliaceae</taxon>
        <taxon>Borrelia</taxon>
    </lineage>
</organism>
<reference key="1">
    <citation type="submission" date="2004-12" db="EMBL/GenBank/DDBJ databases">
        <title>The genome sequence of Borrelia hermsii and Borrelia turicatae: comparative analysis of two agents of endemic N. America relapsing fever.</title>
        <authorList>
            <person name="Porcella S.F."/>
            <person name="Raffel S.J."/>
            <person name="Schrumpf M.E."/>
            <person name="Montgomery B."/>
            <person name="Smith T."/>
            <person name="Schwan T.G."/>
        </authorList>
    </citation>
    <scope>NUCLEOTIDE SEQUENCE [LARGE SCALE GENOMIC DNA]</scope>
    <source>
        <strain>HS1 / DAH</strain>
    </source>
</reference>
<keyword id="KW-0067">ATP-binding</keyword>
<keyword id="KW-0520">NAD</keyword>
<keyword id="KW-0547">Nucleotide-binding</keyword>
<keyword id="KW-0548">Nucleotidyltransferase</keyword>
<keyword id="KW-0662">Pyridine nucleotide biosynthesis</keyword>
<keyword id="KW-0808">Transferase</keyword>
<evidence type="ECO:0000255" key="1">
    <source>
        <dbReference type="HAMAP-Rule" id="MF_00244"/>
    </source>
</evidence>
<dbReference type="EC" id="2.7.7.18" evidence="1"/>
<dbReference type="EMBL" id="CP000048">
    <property type="protein sequence ID" value="AAX17278.1"/>
    <property type="molecule type" value="Genomic_DNA"/>
</dbReference>
<dbReference type="RefSeq" id="WP_012422528.1">
    <property type="nucleotide sequence ID" value="NZ_CP073136.1"/>
</dbReference>
<dbReference type="SMR" id="B2S1C4"/>
<dbReference type="GeneID" id="71843612"/>
<dbReference type="KEGG" id="bhr:BH0782"/>
<dbReference type="HOGENOM" id="CLU_069765_3_2_12"/>
<dbReference type="UniPathway" id="UPA00253">
    <property type="reaction ID" value="UER00332"/>
</dbReference>
<dbReference type="Proteomes" id="UP000008834">
    <property type="component" value="Chromosome"/>
</dbReference>
<dbReference type="GO" id="GO:0005524">
    <property type="term" value="F:ATP binding"/>
    <property type="evidence" value="ECO:0007669"/>
    <property type="project" value="UniProtKB-KW"/>
</dbReference>
<dbReference type="GO" id="GO:0004515">
    <property type="term" value="F:nicotinate-nucleotide adenylyltransferase activity"/>
    <property type="evidence" value="ECO:0007669"/>
    <property type="project" value="UniProtKB-UniRule"/>
</dbReference>
<dbReference type="GO" id="GO:0009435">
    <property type="term" value="P:NAD biosynthetic process"/>
    <property type="evidence" value="ECO:0007669"/>
    <property type="project" value="UniProtKB-UniRule"/>
</dbReference>
<dbReference type="CDD" id="cd02165">
    <property type="entry name" value="NMNAT"/>
    <property type="match status" value="1"/>
</dbReference>
<dbReference type="Gene3D" id="3.40.50.620">
    <property type="entry name" value="HUPs"/>
    <property type="match status" value="1"/>
</dbReference>
<dbReference type="HAMAP" id="MF_00244">
    <property type="entry name" value="NaMN_adenylyltr"/>
    <property type="match status" value="1"/>
</dbReference>
<dbReference type="InterPro" id="IPR004821">
    <property type="entry name" value="Cyt_trans-like"/>
</dbReference>
<dbReference type="InterPro" id="IPR005248">
    <property type="entry name" value="NadD/NMNAT"/>
</dbReference>
<dbReference type="InterPro" id="IPR014729">
    <property type="entry name" value="Rossmann-like_a/b/a_fold"/>
</dbReference>
<dbReference type="NCBIfam" id="TIGR00125">
    <property type="entry name" value="cyt_tran_rel"/>
    <property type="match status" value="1"/>
</dbReference>
<dbReference type="NCBIfam" id="TIGR00482">
    <property type="entry name" value="nicotinate (nicotinamide) nucleotide adenylyltransferase"/>
    <property type="match status" value="1"/>
</dbReference>
<dbReference type="NCBIfam" id="NF000840">
    <property type="entry name" value="PRK00071.1-3"/>
    <property type="match status" value="1"/>
</dbReference>
<dbReference type="PANTHER" id="PTHR39321">
    <property type="entry name" value="NICOTINATE-NUCLEOTIDE ADENYLYLTRANSFERASE-RELATED"/>
    <property type="match status" value="1"/>
</dbReference>
<dbReference type="PANTHER" id="PTHR39321:SF3">
    <property type="entry name" value="PHOSPHOPANTETHEINE ADENYLYLTRANSFERASE"/>
    <property type="match status" value="1"/>
</dbReference>
<dbReference type="Pfam" id="PF01467">
    <property type="entry name" value="CTP_transf_like"/>
    <property type="match status" value="1"/>
</dbReference>
<dbReference type="SUPFAM" id="SSF52374">
    <property type="entry name" value="Nucleotidylyl transferase"/>
    <property type="match status" value="1"/>
</dbReference>
<comment type="function">
    <text evidence="1">Catalyzes the reversible adenylation of nicotinate mononucleotide (NaMN) to nicotinic acid adenine dinucleotide (NaAD).</text>
</comment>
<comment type="catalytic activity">
    <reaction evidence="1">
        <text>nicotinate beta-D-ribonucleotide + ATP + H(+) = deamido-NAD(+) + diphosphate</text>
        <dbReference type="Rhea" id="RHEA:22860"/>
        <dbReference type="ChEBI" id="CHEBI:15378"/>
        <dbReference type="ChEBI" id="CHEBI:30616"/>
        <dbReference type="ChEBI" id="CHEBI:33019"/>
        <dbReference type="ChEBI" id="CHEBI:57502"/>
        <dbReference type="ChEBI" id="CHEBI:58437"/>
        <dbReference type="EC" id="2.7.7.18"/>
    </reaction>
</comment>
<comment type="pathway">
    <text evidence="1">Cofactor biosynthesis; NAD(+) biosynthesis; deamido-NAD(+) from nicotinate D-ribonucleotide: step 1/1.</text>
</comment>
<comment type="similarity">
    <text evidence="1">Belongs to the NadD family.</text>
</comment>
<proteinExistence type="inferred from homology"/>
<feature type="chain" id="PRO_1000100762" description="Probable nicotinate-nucleotide adenylyltransferase">
    <location>
        <begin position="1"/>
        <end position="190"/>
    </location>
</feature>